<keyword id="KW-0002">3D-structure</keyword>
<keyword id="KW-0025">Alternative splicing</keyword>
<keyword id="KW-0175">Coiled coil</keyword>
<keyword id="KW-0963">Cytoplasm</keyword>
<keyword id="KW-0413">Isomerase</keyword>
<keyword id="KW-0496">Mitochondrion</keyword>
<keyword id="KW-0507">mRNA processing</keyword>
<keyword id="KW-0508">mRNA splicing</keyword>
<keyword id="KW-0539">Nucleus</keyword>
<keyword id="KW-1267">Proteomics identification</keyword>
<keyword id="KW-1185">Reference proteome</keyword>
<keyword id="KW-0698">rRNA processing</keyword>
<keyword id="KW-0809">Transit peptide</keyword>
<keyword id="KW-0819">tRNA processing</keyword>
<comment type="function">
    <text evidence="5 6 7 8">Catalyzes uridine to pseudouridine isomerization (pseudouridylation) of different mitochondrial RNA substrates (PubMed:27974379, PubMed:28082677). Acts on position 1397 in 16S mitochondrial ribosomal RNA (16S mt-rRNA) (PubMed:27974379). This modification is required for the assembly of 16S mt-rRNA into a functional mitochondrial ribosome (PubMed:27974379). As a component of a functional protein-RNA module, consisting of RCC1L, NGRN, RPUSD3, RPUSD4, TRUB2, FASTKD2 and 16S mt-rRNA, controls 16S mt-rRNA abundance and is required for intra-mitochondrial translation (PubMed:27667664). Acts on position 39 in mitochondrial tRNA(Phe) (PubMed:28082677). Also catalyzes pseudouridylation of mRNAs in nucleus: acts as a regulator of pre-mRNA splicing by mediating pseudouridylation of pre-mRNAs at locations associated with alternatively spliced regions (PubMed:35051350). Pseudouridylation of pre-mRNAs near splice sites directly regulates mRNA splicing and mRNA 3'-end processing (PubMed:35051350).</text>
</comment>
<comment type="catalytic activity">
    <reaction evidence="12">
        <text>uridine in 5S rRNA = pseudouridine in 5S rRNA</text>
        <dbReference type="Rhea" id="RHEA:47036"/>
        <dbReference type="Rhea" id="RHEA-COMP:11730"/>
        <dbReference type="Rhea" id="RHEA-COMP:11731"/>
        <dbReference type="ChEBI" id="CHEBI:65314"/>
        <dbReference type="ChEBI" id="CHEBI:65315"/>
    </reaction>
</comment>
<comment type="catalytic activity">
    <reaction evidence="13">
        <text>a uridine in tRNA = a pseudouridine in tRNA</text>
        <dbReference type="Rhea" id="RHEA:54572"/>
        <dbReference type="Rhea" id="RHEA-COMP:13339"/>
        <dbReference type="Rhea" id="RHEA-COMP:13934"/>
        <dbReference type="ChEBI" id="CHEBI:65314"/>
        <dbReference type="ChEBI" id="CHEBI:65315"/>
    </reaction>
</comment>
<comment type="catalytic activity">
    <reaction evidence="8">
        <text>a uridine in mRNA = a pseudouridine in mRNA</text>
        <dbReference type="Rhea" id="RHEA:56644"/>
        <dbReference type="Rhea" id="RHEA-COMP:14658"/>
        <dbReference type="Rhea" id="RHEA-COMP:14659"/>
        <dbReference type="ChEBI" id="CHEBI:65314"/>
        <dbReference type="ChEBI" id="CHEBI:65315"/>
    </reaction>
</comment>
<comment type="subunit">
    <text evidence="5 7">Interacts with 16S mt-rRNA, mt-tRNA(Phe) and mt-tRNA(Met) (PubMed:28082677). Forms a regulatory protein-RNA complex, consisting of RCC1L, NGRN, RPUSD3, RPUSD4, TRUB2, FASTKD2 and 16S mt-rRNA (PubMed:27667664).</text>
</comment>
<comment type="interaction">
    <interactant intactId="EBI-7825200">
        <id>Q96CM3</id>
    </interactant>
    <interactant intactId="EBI-852851">
        <id>P01100</id>
        <label>FOS</label>
    </interactant>
    <organismsDiffer>false</organismsDiffer>
    <experiments>4</experiments>
</comment>
<comment type="interaction">
    <interactant intactId="EBI-7825200">
        <id>Q96CM3</id>
    </interactant>
    <interactant intactId="EBI-2552594">
        <id>P50440</id>
        <label>GATM</label>
    </interactant>
    <organismsDiffer>false</organismsDiffer>
    <experiments>3</experiments>
</comment>
<comment type="interaction">
    <interactant intactId="EBI-7825200">
        <id>Q96CM3</id>
    </interactant>
    <interactant intactId="EBI-719620">
        <id>Q00613</id>
        <label>HSF1</label>
    </interactant>
    <organismsDiffer>false</organismsDiffer>
    <experiments>3</experiments>
</comment>
<comment type="subcellular location">
    <subcellularLocation>
        <location evidence="4 6 7">Mitochondrion matrix</location>
    </subcellularLocation>
    <subcellularLocation>
        <location evidence="4">Nucleus</location>
    </subcellularLocation>
    <subcellularLocation>
        <location evidence="4">Cytoplasm</location>
    </subcellularLocation>
    <text evidence="4 6 7">Mainly localizes to mitochondrion (PubMed:23435261, PubMed:27974379, PubMed:28082677). Localizes to mitochondrial RNA granules, platforms for post-transcriptional RNA modification and ribosome assembly (PubMed:27974379, PubMed:28082677). Also found in nucleus and cytoplasm (PubMed:23435261).</text>
</comment>
<comment type="alternative products">
    <event type="alternative splicing"/>
    <isoform>
        <id>Q96CM3-1</id>
        <name>1</name>
        <sequence type="displayed"/>
    </isoform>
    <isoform>
        <id>Q96CM3-2</id>
        <name>2</name>
        <sequence type="described" ref="VSP_047375"/>
    </isoform>
</comment>
<comment type="similarity">
    <text evidence="11">Belongs to the pseudouridine synthase RluA family.</text>
</comment>
<comment type="sequence caution" evidence="11">
    <conflict type="frameshift">
        <sequence resource="EMBL" id="AK308059"/>
    </conflict>
</comment>
<dbReference type="EC" id="5.4.99.-" evidence="6"/>
<dbReference type="EMBL" id="AK027400">
    <property type="protein sequence ID" value="BAB55086.1"/>
    <property type="molecule type" value="mRNA"/>
</dbReference>
<dbReference type="EMBL" id="AK308059">
    <property type="status" value="NOT_ANNOTATED_CDS"/>
    <property type="molecule type" value="mRNA"/>
</dbReference>
<dbReference type="EMBL" id="BC014131">
    <property type="protein sequence ID" value="AAH14131.1"/>
    <property type="molecule type" value="mRNA"/>
</dbReference>
<dbReference type="CCDS" id="CCDS53721.1">
    <molecule id="Q96CM3-2"/>
</dbReference>
<dbReference type="CCDS" id="CCDS8469.1">
    <molecule id="Q96CM3-1"/>
</dbReference>
<dbReference type="RefSeq" id="NP_001138299.1">
    <molecule id="Q96CM3-2"/>
    <property type="nucleotide sequence ID" value="NM_001144827.2"/>
</dbReference>
<dbReference type="RefSeq" id="NP_116184.2">
    <molecule id="Q96CM3-1"/>
    <property type="nucleotide sequence ID" value="NM_032795.3"/>
</dbReference>
<dbReference type="PDB" id="5UBA">
    <property type="method" value="X-ray"/>
    <property type="resolution" value="1.54 A"/>
    <property type="chains" value="A=89-365"/>
</dbReference>
<dbReference type="PDBsum" id="5UBA"/>
<dbReference type="SMR" id="Q96CM3"/>
<dbReference type="BioGRID" id="124324">
    <property type="interactions" value="259"/>
</dbReference>
<dbReference type="CORUM" id="Q96CM3"/>
<dbReference type="FunCoup" id="Q96CM3">
    <property type="interactions" value="2288"/>
</dbReference>
<dbReference type="IntAct" id="Q96CM3">
    <property type="interactions" value="71"/>
</dbReference>
<dbReference type="MINT" id="Q96CM3"/>
<dbReference type="STRING" id="9606.ENSP00000298317"/>
<dbReference type="iPTMnet" id="Q96CM3"/>
<dbReference type="PhosphoSitePlus" id="Q96CM3"/>
<dbReference type="SwissPalm" id="Q96CM3"/>
<dbReference type="BioMuta" id="RPUSD4"/>
<dbReference type="DMDM" id="74731354"/>
<dbReference type="jPOST" id="Q96CM3"/>
<dbReference type="MassIVE" id="Q96CM3"/>
<dbReference type="PaxDb" id="9606-ENSP00000298317"/>
<dbReference type="PeptideAtlas" id="Q96CM3"/>
<dbReference type="ProteomicsDB" id="22146"/>
<dbReference type="ProteomicsDB" id="76192">
    <molecule id="Q96CM3-1"/>
</dbReference>
<dbReference type="Pumba" id="Q96CM3"/>
<dbReference type="Antibodypedia" id="50828">
    <property type="antibodies" value="41 antibodies from 14 providers"/>
</dbReference>
<dbReference type="DNASU" id="84881"/>
<dbReference type="Ensembl" id="ENST00000298317.9">
    <molecule id="Q96CM3-1"/>
    <property type="protein sequence ID" value="ENSP00000298317.4"/>
    <property type="gene ID" value="ENSG00000165526.9"/>
</dbReference>
<dbReference type="Ensembl" id="ENST00000533628.5">
    <molecule id="Q96CM3-2"/>
    <property type="protein sequence ID" value="ENSP00000433065.1"/>
    <property type="gene ID" value="ENSG00000165526.9"/>
</dbReference>
<dbReference type="GeneID" id="84881"/>
<dbReference type="KEGG" id="hsa:84881"/>
<dbReference type="MANE-Select" id="ENST00000298317.9">
    <property type="protein sequence ID" value="ENSP00000298317.4"/>
    <property type="RefSeq nucleotide sequence ID" value="NM_032795.3"/>
    <property type="RefSeq protein sequence ID" value="NP_116184.2"/>
</dbReference>
<dbReference type="UCSC" id="uc001qde.3">
    <molecule id="Q96CM3-1"/>
    <property type="organism name" value="human"/>
</dbReference>
<dbReference type="AGR" id="HGNC:25898"/>
<dbReference type="CTD" id="84881"/>
<dbReference type="DisGeNET" id="84881"/>
<dbReference type="GeneCards" id="RPUSD4"/>
<dbReference type="HGNC" id="HGNC:25898">
    <property type="gene designation" value="RPUSD4"/>
</dbReference>
<dbReference type="HPA" id="ENSG00000165526">
    <property type="expression patterns" value="Tissue enhanced (skeletal muscle, tongue)"/>
</dbReference>
<dbReference type="neXtProt" id="NX_Q96CM3"/>
<dbReference type="OpenTargets" id="ENSG00000165526"/>
<dbReference type="PharmGKB" id="PA134875000"/>
<dbReference type="VEuPathDB" id="HostDB:ENSG00000165526"/>
<dbReference type="eggNOG" id="KOG1919">
    <property type="taxonomic scope" value="Eukaryota"/>
</dbReference>
<dbReference type="GeneTree" id="ENSGT00940000158436"/>
<dbReference type="HOGENOM" id="CLU_016902_2_1_1"/>
<dbReference type="InParanoid" id="Q96CM3"/>
<dbReference type="OMA" id="AKKYWAI"/>
<dbReference type="OrthoDB" id="428658at2759"/>
<dbReference type="PAN-GO" id="Q96CM3">
    <property type="GO annotations" value="2 GO annotations based on evolutionary models"/>
</dbReference>
<dbReference type="PhylomeDB" id="Q96CM3"/>
<dbReference type="TreeFam" id="TF337899"/>
<dbReference type="BRENDA" id="5.4.99.B22">
    <property type="organism ID" value="2681"/>
</dbReference>
<dbReference type="PathwayCommons" id="Q96CM3"/>
<dbReference type="SignaLink" id="Q96CM3"/>
<dbReference type="BioGRID-ORCS" id="84881">
    <property type="hits" value="351 hits in 1175 CRISPR screens"/>
</dbReference>
<dbReference type="CD-CODE" id="5965E019">
    <property type="entry name" value="mtRNA granule"/>
</dbReference>
<dbReference type="ChiTaRS" id="RPUSD4">
    <property type="organism name" value="human"/>
</dbReference>
<dbReference type="GenomeRNAi" id="84881"/>
<dbReference type="Pharos" id="Q96CM3">
    <property type="development level" value="Tdark"/>
</dbReference>
<dbReference type="PRO" id="PR:Q96CM3"/>
<dbReference type="Proteomes" id="UP000005640">
    <property type="component" value="Chromosome 11"/>
</dbReference>
<dbReference type="RNAct" id="Q96CM3">
    <property type="molecule type" value="protein"/>
</dbReference>
<dbReference type="Bgee" id="ENSG00000165526">
    <property type="expression patterns" value="Expressed in skeletal muscle tissue of rectus abdominis and 185 other cell types or tissues"/>
</dbReference>
<dbReference type="ExpressionAtlas" id="Q96CM3">
    <property type="expression patterns" value="baseline and differential"/>
</dbReference>
<dbReference type="GO" id="GO:0005759">
    <property type="term" value="C:mitochondrial matrix"/>
    <property type="evidence" value="ECO:0000314"/>
    <property type="project" value="FlyBase"/>
</dbReference>
<dbReference type="GO" id="GO:0005739">
    <property type="term" value="C:mitochondrion"/>
    <property type="evidence" value="ECO:0000314"/>
    <property type="project" value="HPA"/>
</dbReference>
<dbReference type="GO" id="GO:0005654">
    <property type="term" value="C:nucleoplasm"/>
    <property type="evidence" value="ECO:0000314"/>
    <property type="project" value="HPA"/>
</dbReference>
<dbReference type="GO" id="GO:0035770">
    <property type="term" value="C:ribonucleoprotein granule"/>
    <property type="evidence" value="ECO:0000314"/>
    <property type="project" value="FlyBase"/>
</dbReference>
<dbReference type="GO" id="GO:1990400">
    <property type="term" value="F:mitochondrial ribosomal large subunit rRNA binding"/>
    <property type="evidence" value="ECO:0000314"/>
    <property type="project" value="FlyBase"/>
</dbReference>
<dbReference type="GO" id="GO:0009982">
    <property type="term" value="F:pseudouridine synthase activity"/>
    <property type="evidence" value="ECO:0000314"/>
    <property type="project" value="UniProtKB"/>
</dbReference>
<dbReference type="GO" id="GO:0003723">
    <property type="term" value="F:RNA binding"/>
    <property type="evidence" value="ECO:0007005"/>
    <property type="project" value="UniProtKB"/>
</dbReference>
<dbReference type="GO" id="GO:0000049">
    <property type="term" value="F:tRNA binding"/>
    <property type="evidence" value="ECO:0000314"/>
    <property type="project" value="FlyBase"/>
</dbReference>
<dbReference type="GO" id="GO:0106029">
    <property type="term" value="F:tRNA pseudouridine synthase activity"/>
    <property type="evidence" value="ECO:0007669"/>
    <property type="project" value="RHEA"/>
</dbReference>
<dbReference type="GO" id="GO:0070902">
    <property type="term" value="P:mitochondrial tRNA pseudouridine synthesis"/>
    <property type="evidence" value="ECO:0000315"/>
    <property type="project" value="FlyBase"/>
</dbReference>
<dbReference type="GO" id="GO:0006397">
    <property type="term" value="P:mRNA processing"/>
    <property type="evidence" value="ECO:0007669"/>
    <property type="project" value="UniProtKB-KW"/>
</dbReference>
<dbReference type="GO" id="GO:1990481">
    <property type="term" value="P:mRNA pseudouridine synthesis"/>
    <property type="evidence" value="ECO:0000314"/>
    <property type="project" value="UniProtKB"/>
</dbReference>
<dbReference type="GO" id="GO:0070131">
    <property type="term" value="P:positive regulation of mitochondrial translation"/>
    <property type="evidence" value="ECO:0000315"/>
    <property type="project" value="UniProtKB"/>
</dbReference>
<dbReference type="GO" id="GO:0008380">
    <property type="term" value="P:RNA splicing"/>
    <property type="evidence" value="ECO:0007669"/>
    <property type="project" value="UniProtKB-KW"/>
</dbReference>
<dbReference type="GO" id="GO:0031118">
    <property type="term" value="P:rRNA pseudouridine synthesis"/>
    <property type="evidence" value="ECO:0000315"/>
    <property type="project" value="FlyBase"/>
</dbReference>
<dbReference type="CDD" id="cd02869">
    <property type="entry name" value="PseudoU_synth_RluA_like"/>
    <property type="match status" value="1"/>
</dbReference>
<dbReference type="FunFam" id="3.30.2350.10:FF:000015">
    <property type="entry name" value="Mitochondrial RNA pseudouridine synthase RPUSD4"/>
    <property type="match status" value="1"/>
</dbReference>
<dbReference type="Gene3D" id="3.30.2350.10">
    <property type="entry name" value="Pseudouridine synthase"/>
    <property type="match status" value="1"/>
</dbReference>
<dbReference type="InterPro" id="IPR020103">
    <property type="entry name" value="PsdUridine_synth_cat_dom_sf"/>
</dbReference>
<dbReference type="InterPro" id="IPR006224">
    <property type="entry name" value="PsdUridine_synth_RluA-like_CS"/>
</dbReference>
<dbReference type="InterPro" id="IPR006145">
    <property type="entry name" value="PsdUridine_synth_RsuA/RluA"/>
</dbReference>
<dbReference type="InterPro" id="IPR050188">
    <property type="entry name" value="RluA_PseudoU_synthase"/>
</dbReference>
<dbReference type="PANTHER" id="PTHR21600">
    <property type="entry name" value="MITOCHONDRIAL RNA PSEUDOURIDINE SYNTHASE"/>
    <property type="match status" value="1"/>
</dbReference>
<dbReference type="PANTHER" id="PTHR21600:SF83">
    <property type="entry name" value="PSEUDOURIDYLATE SYNTHASE RPUSD4, MITOCHONDRIAL"/>
    <property type="match status" value="1"/>
</dbReference>
<dbReference type="Pfam" id="PF00849">
    <property type="entry name" value="PseudoU_synth_2"/>
    <property type="match status" value="1"/>
</dbReference>
<dbReference type="SUPFAM" id="SSF55120">
    <property type="entry name" value="Pseudouridine synthase"/>
    <property type="match status" value="1"/>
</dbReference>
<dbReference type="PROSITE" id="PS01129">
    <property type="entry name" value="PSI_RLU"/>
    <property type="match status" value="1"/>
</dbReference>
<accession>Q96CM3</accession>
<accession>E9PML2</accession>
<accession>Q96K56</accession>
<evidence type="ECO:0000250" key="1">
    <source>
        <dbReference type="UniProtKB" id="P0AA39"/>
    </source>
</evidence>
<evidence type="ECO:0000255" key="2"/>
<evidence type="ECO:0000269" key="3">
    <source>
    </source>
</evidence>
<evidence type="ECO:0000269" key="4">
    <source>
    </source>
</evidence>
<evidence type="ECO:0000269" key="5">
    <source>
    </source>
</evidence>
<evidence type="ECO:0000269" key="6">
    <source>
    </source>
</evidence>
<evidence type="ECO:0000269" key="7">
    <source>
    </source>
</evidence>
<evidence type="ECO:0000269" key="8">
    <source>
    </source>
</evidence>
<evidence type="ECO:0000303" key="9">
    <source>
    </source>
</evidence>
<evidence type="ECO:0000303" key="10">
    <source>
    </source>
</evidence>
<evidence type="ECO:0000305" key="11"/>
<evidence type="ECO:0000305" key="12">
    <source>
    </source>
</evidence>
<evidence type="ECO:0000305" key="13">
    <source>
    </source>
</evidence>
<evidence type="ECO:0000312" key="14">
    <source>
        <dbReference type="HGNC" id="HGNC:25898"/>
    </source>
</evidence>
<evidence type="ECO:0007744" key="15">
    <source>
        <dbReference type="PDB" id="5UBA"/>
    </source>
</evidence>
<evidence type="ECO:0007829" key="16">
    <source>
        <dbReference type="PDB" id="5UBA"/>
    </source>
</evidence>
<proteinExistence type="evidence at protein level"/>
<organism>
    <name type="scientific">Homo sapiens</name>
    <name type="common">Human</name>
    <dbReference type="NCBI Taxonomy" id="9606"/>
    <lineage>
        <taxon>Eukaryota</taxon>
        <taxon>Metazoa</taxon>
        <taxon>Chordata</taxon>
        <taxon>Craniata</taxon>
        <taxon>Vertebrata</taxon>
        <taxon>Euteleostomi</taxon>
        <taxon>Mammalia</taxon>
        <taxon>Eutheria</taxon>
        <taxon>Euarchontoglires</taxon>
        <taxon>Primates</taxon>
        <taxon>Haplorrhini</taxon>
        <taxon>Catarrhini</taxon>
        <taxon>Hominidae</taxon>
        <taxon>Homo</taxon>
    </lineage>
</organism>
<sequence length="377" mass="42205">MAAPRWSASGPWIRGNGQGCGSLFTLVSKPFCAAAAASTAINAQRLAEKLRAQKREQDTKKEPVSTNAVQRRVQEIVRFTRQLQRVHPNVLAKALTRGILHQDKNLVVINKPYGLPVHGGPGVQLCITDVLPILAKMLHGHKAEPLHLCHRLDKETTGVMVLAWDKDMAHQVQELFRTRQVVKKYWAITVHVPMPSAGVVDIPIVEKEAQGQQQHHKMTLSPSYRMDDGKMVKVRRSRNAQVAVTQYQVLSSTLSSALVELQPITGIKHQLRVHLSFGLDCPILGDHKYSDWNRLAPQKLSVGTLKKLGLEQSKARYIPLHLHARQLILPALGSGKEELNLVCKLPRFFVHSLHRLRLEMPNEDQNENNEAKCLGAQ</sequence>
<gene>
    <name evidence="10 14" type="primary">RPUSD4</name>
</gene>
<protein>
    <recommendedName>
        <fullName evidence="11">Pseudouridylate synthase RPUSD4, mitochondrial</fullName>
        <ecNumber evidence="6">5.4.99.-</ecNumber>
    </recommendedName>
    <alternativeName>
        <fullName evidence="11">RNA pseudouridylate synthase domain-containing protein 4</fullName>
    </alternativeName>
</protein>
<name>RUSD4_HUMAN</name>
<feature type="transit peptide" description="Mitochondrion" evidence="2">
    <location>
        <begin position="1"/>
        <end position="15"/>
    </location>
</feature>
<feature type="chain" id="PRO_0000300825" description="Pseudouridylate synthase RPUSD4, mitochondrial">
    <location>
        <begin position="16"/>
        <end position="377"/>
    </location>
</feature>
<feature type="coiled-coil region" evidence="2">
    <location>
        <begin position="36"/>
        <end position="62"/>
    </location>
</feature>
<feature type="active site" evidence="1">
    <location>
        <position position="153"/>
    </location>
</feature>
<feature type="splice variant" id="VSP_047375" description="In isoform 2." evidence="9">
    <location>
        <begin position="209"/>
        <end position="239"/>
    </location>
</feature>
<feature type="sequence variant" id="VAR_034887" description="In dbSNP:rs2282580." evidence="3">
    <original>Q</original>
    <variation>R</variation>
    <location>
        <position position="44"/>
    </location>
</feature>
<feature type="sequence variant" id="VAR_034888" description="In dbSNP:rs35468281.">
    <original>D</original>
    <variation>G</variation>
    <location>
        <position position="58"/>
    </location>
</feature>
<feature type="sequence variant" id="VAR_034889" description="In dbSNP:rs34809853.">
    <original>E</original>
    <variation>D</variation>
    <location>
        <position position="155"/>
    </location>
</feature>
<feature type="sequence variant" id="VAR_034890" description="In dbSNP:rs35157957.">
    <original>A</original>
    <variation>V</variation>
    <location>
        <position position="209"/>
    </location>
</feature>
<feature type="sequence conflict" description="In Ref. 1; BAB55086." evidence="11" ref="1">
    <original>K</original>
    <variation>E</variation>
    <location>
        <position position="29"/>
    </location>
</feature>
<feature type="helix" evidence="16">
    <location>
        <begin position="89"/>
        <end position="97"/>
    </location>
</feature>
<feature type="strand" evidence="16">
    <location>
        <begin position="104"/>
        <end position="111"/>
    </location>
</feature>
<feature type="helix" evidence="16">
    <location>
        <begin position="127"/>
        <end position="139"/>
    </location>
</feature>
<feature type="strand" evidence="16">
    <location>
        <begin position="156"/>
        <end position="165"/>
    </location>
</feature>
<feature type="helix" evidence="16">
    <location>
        <begin position="166"/>
        <end position="177"/>
    </location>
</feature>
<feature type="strand" evidence="16">
    <location>
        <begin position="181"/>
        <end position="191"/>
    </location>
</feature>
<feature type="strand" evidence="16">
    <location>
        <begin position="194"/>
        <end position="200"/>
    </location>
</feature>
<feature type="strand" evidence="16">
    <location>
        <begin position="223"/>
        <end position="227"/>
    </location>
</feature>
<feature type="strand" evidence="16">
    <location>
        <begin position="230"/>
        <end position="233"/>
    </location>
</feature>
<feature type="strand" evidence="16">
    <location>
        <begin position="245"/>
        <end position="252"/>
    </location>
</feature>
<feature type="strand" evidence="16">
    <location>
        <begin position="254"/>
        <end position="265"/>
    </location>
</feature>
<feature type="helix" evidence="16">
    <location>
        <begin position="270"/>
        <end position="279"/>
    </location>
</feature>
<feature type="turn" evidence="16">
    <location>
        <begin position="287"/>
        <end position="289"/>
    </location>
</feature>
<feature type="helix" evidence="16">
    <location>
        <begin position="302"/>
        <end position="308"/>
    </location>
</feature>
<feature type="helix" evidence="16">
    <location>
        <begin position="312"/>
        <end position="317"/>
    </location>
</feature>
<feature type="strand" evidence="16">
    <location>
        <begin position="322"/>
        <end position="329"/>
    </location>
</feature>
<feature type="strand" evidence="16">
    <location>
        <begin position="339"/>
        <end position="342"/>
    </location>
</feature>
<feature type="helix" evidence="16">
    <location>
        <begin position="347"/>
        <end position="355"/>
    </location>
</feature>
<reference key="1">
    <citation type="journal article" date="2004" name="Nat. Genet.">
        <title>Complete sequencing and characterization of 21,243 full-length human cDNAs.</title>
        <authorList>
            <person name="Ota T."/>
            <person name="Suzuki Y."/>
            <person name="Nishikawa T."/>
            <person name="Otsuki T."/>
            <person name="Sugiyama T."/>
            <person name="Irie R."/>
            <person name="Wakamatsu A."/>
            <person name="Hayashi K."/>
            <person name="Sato H."/>
            <person name="Nagai K."/>
            <person name="Kimura K."/>
            <person name="Makita H."/>
            <person name="Sekine M."/>
            <person name="Obayashi M."/>
            <person name="Nishi T."/>
            <person name="Shibahara T."/>
            <person name="Tanaka T."/>
            <person name="Ishii S."/>
            <person name="Yamamoto J."/>
            <person name="Saito K."/>
            <person name="Kawai Y."/>
            <person name="Isono Y."/>
            <person name="Nakamura Y."/>
            <person name="Nagahari K."/>
            <person name="Murakami K."/>
            <person name="Yasuda T."/>
            <person name="Iwayanagi T."/>
            <person name="Wagatsuma M."/>
            <person name="Shiratori A."/>
            <person name="Sudo H."/>
            <person name="Hosoiri T."/>
            <person name="Kaku Y."/>
            <person name="Kodaira H."/>
            <person name="Kondo H."/>
            <person name="Sugawara M."/>
            <person name="Takahashi M."/>
            <person name="Kanda K."/>
            <person name="Yokoi T."/>
            <person name="Furuya T."/>
            <person name="Kikkawa E."/>
            <person name="Omura Y."/>
            <person name="Abe K."/>
            <person name="Kamihara K."/>
            <person name="Katsuta N."/>
            <person name="Sato K."/>
            <person name="Tanikawa M."/>
            <person name="Yamazaki M."/>
            <person name="Ninomiya K."/>
            <person name="Ishibashi T."/>
            <person name="Yamashita H."/>
            <person name="Murakawa K."/>
            <person name="Fujimori K."/>
            <person name="Tanai H."/>
            <person name="Kimata M."/>
            <person name="Watanabe M."/>
            <person name="Hiraoka S."/>
            <person name="Chiba Y."/>
            <person name="Ishida S."/>
            <person name="Ono Y."/>
            <person name="Takiguchi S."/>
            <person name="Watanabe S."/>
            <person name="Yosida M."/>
            <person name="Hotuta T."/>
            <person name="Kusano J."/>
            <person name="Kanehori K."/>
            <person name="Takahashi-Fujii A."/>
            <person name="Hara H."/>
            <person name="Tanase T.-O."/>
            <person name="Nomura Y."/>
            <person name="Togiya S."/>
            <person name="Komai F."/>
            <person name="Hara R."/>
            <person name="Takeuchi K."/>
            <person name="Arita M."/>
            <person name="Imose N."/>
            <person name="Musashino K."/>
            <person name="Yuuki H."/>
            <person name="Oshima A."/>
            <person name="Sasaki N."/>
            <person name="Aotsuka S."/>
            <person name="Yoshikawa Y."/>
            <person name="Matsunawa H."/>
            <person name="Ichihara T."/>
            <person name="Shiohata N."/>
            <person name="Sano S."/>
            <person name="Moriya S."/>
            <person name="Momiyama H."/>
            <person name="Satoh N."/>
            <person name="Takami S."/>
            <person name="Terashima Y."/>
            <person name="Suzuki O."/>
            <person name="Nakagawa S."/>
            <person name="Senoh A."/>
            <person name="Mizoguchi H."/>
            <person name="Goto Y."/>
            <person name="Shimizu F."/>
            <person name="Wakebe H."/>
            <person name="Hishigaki H."/>
            <person name="Watanabe T."/>
            <person name="Sugiyama A."/>
            <person name="Takemoto M."/>
            <person name="Kawakami B."/>
            <person name="Yamazaki M."/>
            <person name="Watanabe K."/>
            <person name="Kumagai A."/>
            <person name="Itakura S."/>
            <person name="Fukuzumi Y."/>
            <person name="Fujimori Y."/>
            <person name="Komiyama M."/>
            <person name="Tashiro H."/>
            <person name="Tanigami A."/>
            <person name="Fujiwara T."/>
            <person name="Ono T."/>
            <person name="Yamada K."/>
            <person name="Fujii Y."/>
            <person name="Ozaki K."/>
            <person name="Hirao M."/>
            <person name="Ohmori Y."/>
            <person name="Kawabata A."/>
            <person name="Hikiji T."/>
            <person name="Kobatake N."/>
            <person name="Inagaki H."/>
            <person name="Ikema Y."/>
            <person name="Okamoto S."/>
            <person name="Okitani R."/>
            <person name="Kawakami T."/>
            <person name="Noguchi S."/>
            <person name="Itoh T."/>
            <person name="Shigeta K."/>
            <person name="Senba T."/>
            <person name="Matsumura K."/>
            <person name="Nakajima Y."/>
            <person name="Mizuno T."/>
            <person name="Morinaga M."/>
            <person name="Sasaki M."/>
            <person name="Togashi T."/>
            <person name="Oyama M."/>
            <person name="Hata H."/>
            <person name="Watanabe M."/>
            <person name="Komatsu T."/>
            <person name="Mizushima-Sugano J."/>
            <person name="Satoh T."/>
            <person name="Shirai Y."/>
            <person name="Takahashi Y."/>
            <person name="Nakagawa K."/>
            <person name="Okumura K."/>
            <person name="Nagase T."/>
            <person name="Nomura N."/>
            <person name="Kikuchi H."/>
            <person name="Masuho Y."/>
            <person name="Yamashita R."/>
            <person name="Nakai K."/>
            <person name="Yada T."/>
            <person name="Nakamura Y."/>
            <person name="Ohara O."/>
            <person name="Isogai T."/>
            <person name="Sugano S."/>
        </authorList>
    </citation>
    <scope>NUCLEOTIDE SEQUENCE [LARGE SCALE MRNA] (ISOFORMS 1 AND 2)</scope>
    <scope>VARIANT ARG-44</scope>
    <source>
        <tissue>Mammary gland</tissue>
        <tissue>Neuroblastoma</tissue>
    </source>
</reference>
<reference key="2">
    <citation type="journal article" date="2006" name="Nature">
        <title>Human chromosome 11 DNA sequence and analysis including novel gene identification.</title>
        <authorList>
            <person name="Taylor T.D."/>
            <person name="Noguchi H."/>
            <person name="Totoki Y."/>
            <person name="Toyoda A."/>
            <person name="Kuroki Y."/>
            <person name="Dewar K."/>
            <person name="Lloyd C."/>
            <person name="Itoh T."/>
            <person name="Takeda T."/>
            <person name="Kim D.-W."/>
            <person name="She X."/>
            <person name="Barlow K.F."/>
            <person name="Bloom T."/>
            <person name="Bruford E."/>
            <person name="Chang J.L."/>
            <person name="Cuomo C.A."/>
            <person name="Eichler E."/>
            <person name="FitzGerald M.G."/>
            <person name="Jaffe D.B."/>
            <person name="LaButti K."/>
            <person name="Nicol R."/>
            <person name="Park H.-S."/>
            <person name="Seaman C."/>
            <person name="Sougnez C."/>
            <person name="Yang X."/>
            <person name="Zimmer A.R."/>
            <person name="Zody M.C."/>
            <person name="Birren B.W."/>
            <person name="Nusbaum C."/>
            <person name="Fujiyama A."/>
            <person name="Hattori M."/>
            <person name="Rogers J."/>
            <person name="Lander E.S."/>
            <person name="Sakaki Y."/>
        </authorList>
    </citation>
    <scope>NUCLEOTIDE SEQUENCE [LARGE SCALE GENOMIC DNA]</scope>
</reference>
<reference key="3">
    <citation type="journal article" date="2004" name="Genome Res.">
        <title>The status, quality, and expansion of the NIH full-length cDNA project: the Mammalian Gene Collection (MGC).</title>
        <authorList>
            <consortium name="The MGC Project Team"/>
        </authorList>
    </citation>
    <scope>NUCLEOTIDE SEQUENCE [LARGE SCALE MRNA] (ISOFORM 1)</scope>
    <source>
        <tissue>Lung</tissue>
    </source>
</reference>
<reference key="4">
    <citation type="journal article" date="2013" name="Nat. Methods">
        <title>Immunofluorescence and fluorescent-protein tagging show high correlation for protein localization in mammalian cells.</title>
        <authorList>
            <person name="Stadler C."/>
            <person name="Rexhepaj E."/>
            <person name="Singan V.R."/>
            <person name="Murphy R.F."/>
            <person name="Pepperkok R."/>
            <person name="Uhlen M."/>
            <person name="Simpson J.C."/>
            <person name="Lundberg E."/>
        </authorList>
    </citation>
    <scope>SUBCELLULAR LOCATION [LARGE SCALE ANALYSIS]</scope>
</reference>
<reference key="5">
    <citation type="journal article" date="2015" name="Proteomics">
        <title>N-terminome analysis of the human mitochondrial proteome.</title>
        <authorList>
            <person name="Vaca Jacome A.S."/>
            <person name="Rabilloud T."/>
            <person name="Schaeffer-Reiss C."/>
            <person name="Rompais M."/>
            <person name="Ayoub D."/>
            <person name="Lane L."/>
            <person name="Bairoch A."/>
            <person name="Van Dorsselaer A."/>
            <person name="Carapito C."/>
        </authorList>
    </citation>
    <scope>IDENTIFICATION BY MASS SPECTROMETRY [LARGE SCALE ANALYSIS]</scope>
</reference>
<reference key="6">
    <citation type="journal article" date="2016" name="Cell Metab.">
        <title>A Genome-wide CRISPR Death Screen Identifies Genes Essential for Oxidative Phosphorylation.</title>
        <authorList>
            <person name="Arroyo J.D."/>
            <person name="Jourdain A.A."/>
            <person name="Calvo S.E."/>
            <person name="Ballarano C.A."/>
            <person name="Doench J.G."/>
            <person name="Root D.E."/>
            <person name="Mootha V.K."/>
        </authorList>
    </citation>
    <scope>SUBUNIT</scope>
    <scope>FUNCTION</scope>
</reference>
<reference key="7">
    <citation type="journal article" date="2017" name="EMBO Rep.">
        <title>A pseudouridine synthase module is essential for mitochondrial protein synthesis and cell viability.</title>
        <authorList>
            <person name="Antonicka H."/>
            <person name="Choquet K."/>
            <person name="Lin Z.Y."/>
            <person name="Gingras A.C."/>
            <person name="Kleinman C.L."/>
            <person name="Shoubridge E.A."/>
        </authorList>
    </citation>
    <scope>FUNCTION</scope>
    <scope>SUBCELLULAR LOCATION</scope>
    <scope>CATALYTIC ACTIVITY</scope>
</reference>
<reference key="8">
    <citation type="journal article" date="2017" name="J. Biol. Chem.">
        <title>The pseudouridine synthase RPUSD4 is an essential component of mitochondrial RNA granules.</title>
        <authorList>
            <person name="Zaganelli S."/>
            <person name="Rebelo-Guiomar P."/>
            <person name="Maundrell K."/>
            <person name="Rozanska A."/>
            <person name="Pierredon S."/>
            <person name="Powell C.A."/>
            <person name="Jourdain A.A."/>
            <person name="Hulo N."/>
            <person name="Lightowlers R.N."/>
            <person name="Chrzanowska-Lightowlers Z.M."/>
            <person name="Minczuk M."/>
            <person name="Martinou J.C."/>
        </authorList>
    </citation>
    <scope>FUNCTION</scope>
    <scope>SUBCELLULAR LOCATION</scope>
    <scope>CATALYTIC ACTIVITY</scope>
</reference>
<reference key="9">
    <citation type="journal article" date="2022" name="Mol. Cell">
        <title>Pseudouridine synthases modify human pre-mRNA co-transcriptionally and affect pre-mRNA processing.</title>
        <authorList>
            <person name="Martinez N.M."/>
            <person name="Su A."/>
            <person name="Burns M.C."/>
            <person name="Nussbacher J.K."/>
            <person name="Schaening C."/>
            <person name="Sathe S."/>
            <person name="Yeo G.W."/>
            <person name="Gilbert W.V."/>
        </authorList>
    </citation>
    <scope>FUNCTION</scope>
    <scope>CATALYTIC ACTIVITY</scope>
</reference>
<reference evidence="15" key="10">
    <citation type="submission" date="2016-12" db="PDB data bank">
        <title>The crystal structure of human pseudouridylate synthase domain containing 4.</title>
        <authorList>
            <person name="Zeng H."/>
            <person name="Dong A."/>
            <person name="Tempel W."/>
            <person name="Bountra C."/>
            <person name="Arrowsmith C.H."/>
            <person name="Edwards A.M."/>
            <person name="Brown P.J."/>
            <person name="Wu H."/>
        </authorList>
    </citation>
    <scope>X-RAY CRYSTALLOGRAPHY (1.54 ANGSTROMS) OF 89-365</scope>
</reference>